<feature type="chain" id="PRO_1000164376" description="Succinylornithine transaminase">
    <location>
        <begin position="1"/>
        <end position="406"/>
    </location>
</feature>
<feature type="modified residue" description="N6-(pyridoxal phosphate)lysine" evidence="1">
    <location>
        <position position="252"/>
    </location>
</feature>
<proteinExistence type="inferred from homology"/>
<evidence type="ECO:0000255" key="1">
    <source>
        <dbReference type="HAMAP-Rule" id="MF_01173"/>
    </source>
</evidence>
<organism>
    <name type="scientific">Escherichia coli (strain 55989 / EAEC)</name>
    <dbReference type="NCBI Taxonomy" id="585055"/>
    <lineage>
        <taxon>Bacteria</taxon>
        <taxon>Pseudomonadati</taxon>
        <taxon>Pseudomonadota</taxon>
        <taxon>Gammaproteobacteria</taxon>
        <taxon>Enterobacterales</taxon>
        <taxon>Enterobacteriaceae</taxon>
        <taxon>Escherichia</taxon>
    </lineage>
</organism>
<name>ASTC_ECO55</name>
<reference key="1">
    <citation type="journal article" date="2009" name="PLoS Genet.">
        <title>Organised genome dynamics in the Escherichia coli species results in highly diverse adaptive paths.</title>
        <authorList>
            <person name="Touchon M."/>
            <person name="Hoede C."/>
            <person name="Tenaillon O."/>
            <person name="Barbe V."/>
            <person name="Baeriswyl S."/>
            <person name="Bidet P."/>
            <person name="Bingen E."/>
            <person name="Bonacorsi S."/>
            <person name="Bouchier C."/>
            <person name="Bouvet O."/>
            <person name="Calteau A."/>
            <person name="Chiapello H."/>
            <person name="Clermont O."/>
            <person name="Cruveiller S."/>
            <person name="Danchin A."/>
            <person name="Diard M."/>
            <person name="Dossat C."/>
            <person name="Karoui M.E."/>
            <person name="Frapy E."/>
            <person name="Garry L."/>
            <person name="Ghigo J.M."/>
            <person name="Gilles A.M."/>
            <person name="Johnson J."/>
            <person name="Le Bouguenec C."/>
            <person name="Lescat M."/>
            <person name="Mangenot S."/>
            <person name="Martinez-Jehanne V."/>
            <person name="Matic I."/>
            <person name="Nassif X."/>
            <person name="Oztas S."/>
            <person name="Petit M.A."/>
            <person name="Pichon C."/>
            <person name="Rouy Z."/>
            <person name="Ruf C.S."/>
            <person name="Schneider D."/>
            <person name="Tourret J."/>
            <person name="Vacherie B."/>
            <person name="Vallenet D."/>
            <person name="Medigue C."/>
            <person name="Rocha E.P.C."/>
            <person name="Denamur E."/>
        </authorList>
    </citation>
    <scope>NUCLEOTIDE SEQUENCE [LARGE SCALE GENOMIC DNA]</scope>
    <source>
        <strain>55989 / EAEC</strain>
    </source>
</reference>
<protein>
    <recommendedName>
        <fullName evidence="1">Succinylornithine transaminase</fullName>
        <ecNumber evidence="1">2.6.1.81</ecNumber>
    </recommendedName>
    <alternativeName>
        <fullName evidence="1">Succinylornithine aminotransferase</fullName>
    </alternativeName>
</protein>
<accession>B7L6M2</accession>
<gene>
    <name evidence="1" type="primary">astC</name>
    <name evidence="1" type="synonym">argM</name>
    <name type="ordered locus">EC55989_1916</name>
</gene>
<comment type="function">
    <text evidence="1">Catalyzes the transamination of N(2)-succinylornithine and alpha-ketoglutarate into N(2)-succinylglutamate semialdehyde and glutamate. Can also act as an acetylornithine aminotransferase.</text>
</comment>
<comment type="catalytic activity">
    <reaction evidence="1">
        <text>N(2)-succinyl-L-ornithine + 2-oxoglutarate = N-succinyl-L-glutamate 5-semialdehyde + L-glutamate</text>
        <dbReference type="Rhea" id="RHEA:16953"/>
        <dbReference type="ChEBI" id="CHEBI:16810"/>
        <dbReference type="ChEBI" id="CHEBI:29985"/>
        <dbReference type="ChEBI" id="CHEBI:58514"/>
        <dbReference type="ChEBI" id="CHEBI:58520"/>
        <dbReference type="EC" id="2.6.1.81"/>
    </reaction>
</comment>
<comment type="cofactor">
    <cofactor evidence="1">
        <name>pyridoxal 5'-phosphate</name>
        <dbReference type="ChEBI" id="CHEBI:597326"/>
    </cofactor>
</comment>
<comment type="pathway">
    <text evidence="1">Amino-acid degradation; L-arginine degradation via AST pathway; L-glutamate and succinate from L-arginine: step 3/5.</text>
</comment>
<comment type="similarity">
    <text evidence="1">Belongs to the class-III pyridoxal-phosphate-dependent aminotransferase family. AstC subfamily.</text>
</comment>
<keyword id="KW-0032">Aminotransferase</keyword>
<keyword id="KW-0056">Arginine metabolism</keyword>
<keyword id="KW-0663">Pyridoxal phosphate</keyword>
<keyword id="KW-1185">Reference proteome</keyword>
<keyword id="KW-0808">Transferase</keyword>
<sequence length="406" mass="43733">MSQPITRENFNEWMIPVYAPAPFIPVRGEGSRLWDQQGKEYIDFAGGIAVNALGHAHPELREALNEQASKFWHTGNGYTNEPVLRLAKKLIDATFADRVFFCNSGAEANEAALKLARKFAHDRYGSHKSGIVAFKNAFHGRTLFTVSAGGQPAYSQDFAPLPPDIRHAAYNDINSASALIDDATCAVIVEPIQGEGGVVPASNAFLQDLRELCDRHNALLIFDEVQTGVGRTGELYAYMHYGVTPDLLTTAKALGGGFPVGALLATEECARVMTVGTHGTTYGGNPLASAVAGKVLELINTPEMLNGVKQRHDWFVERLNTLNHRYGLFSEVRGLGLLIGCVLNADYAGQAKQISQEAAKAGVMVLIAGGNVVRFAPALNVSEEEVTTGLDRFAAACEHFVSRGSS</sequence>
<dbReference type="EC" id="2.6.1.81" evidence="1"/>
<dbReference type="EMBL" id="CU928145">
    <property type="protein sequence ID" value="CAU97775.1"/>
    <property type="molecule type" value="Genomic_DNA"/>
</dbReference>
<dbReference type="RefSeq" id="WP_000082039.1">
    <property type="nucleotide sequence ID" value="NC_011748.1"/>
</dbReference>
<dbReference type="SMR" id="B7L6M2"/>
<dbReference type="KEGG" id="eck:EC55989_1916"/>
<dbReference type="HOGENOM" id="CLU_016922_10_1_6"/>
<dbReference type="UniPathway" id="UPA00185">
    <property type="reaction ID" value="UER00281"/>
</dbReference>
<dbReference type="Proteomes" id="UP000000746">
    <property type="component" value="Chromosome"/>
</dbReference>
<dbReference type="GO" id="GO:0042802">
    <property type="term" value="F:identical protein binding"/>
    <property type="evidence" value="ECO:0007669"/>
    <property type="project" value="TreeGrafter"/>
</dbReference>
<dbReference type="GO" id="GO:0030170">
    <property type="term" value="F:pyridoxal phosphate binding"/>
    <property type="evidence" value="ECO:0007669"/>
    <property type="project" value="UniProtKB-UniRule"/>
</dbReference>
<dbReference type="GO" id="GO:0043825">
    <property type="term" value="F:succinylornithine transaminase activity"/>
    <property type="evidence" value="ECO:0007669"/>
    <property type="project" value="UniProtKB-EC"/>
</dbReference>
<dbReference type="GO" id="GO:1901607">
    <property type="term" value="P:alpha-amino acid biosynthetic process"/>
    <property type="evidence" value="ECO:0007669"/>
    <property type="project" value="UniProtKB-ARBA"/>
</dbReference>
<dbReference type="GO" id="GO:0019544">
    <property type="term" value="P:arginine catabolic process to glutamate"/>
    <property type="evidence" value="ECO:0007669"/>
    <property type="project" value="UniProtKB-UniRule"/>
</dbReference>
<dbReference type="GO" id="GO:0019545">
    <property type="term" value="P:arginine catabolic process to succinate"/>
    <property type="evidence" value="ECO:0007669"/>
    <property type="project" value="UniProtKB-UniRule"/>
</dbReference>
<dbReference type="GO" id="GO:0006593">
    <property type="term" value="P:ornithine catabolic process"/>
    <property type="evidence" value="ECO:0007669"/>
    <property type="project" value="InterPro"/>
</dbReference>
<dbReference type="CDD" id="cd00610">
    <property type="entry name" value="OAT_like"/>
    <property type="match status" value="1"/>
</dbReference>
<dbReference type="FunFam" id="3.40.640.10:FF:000004">
    <property type="entry name" value="Acetylornithine aminotransferase"/>
    <property type="match status" value="1"/>
</dbReference>
<dbReference type="FunFam" id="3.90.1150.10:FF:000009">
    <property type="entry name" value="Succinylornithine transaminase"/>
    <property type="match status" value="1"/>
</dbReference>
<dbReference type="Gene3D" id="3.90.1150.10">
    <property type="entry name" value="Aspartate Aminotransferase, domain 1"/>
    <property type="match status" value="1"/>
</dbReference>
<dbReference type="Gene3D" id="3.40.640.10">
    <property type="entry name" value="Type I PLP-dependent aspartate aminotransferase-like (Major domain)"/>
    <property type="match status" value="1"/>
</dbReference>
<dbReference type="HAMAP" id="MF_01107">
    <property type="entry name" value="ArgD_aminotrans_3"/>
    <property type="match status" value="1"/>
</dbReference>
<dbReference type="HAMAP" id="MF_01173">
    <property type="entry name" value="AstC_aminotrans_3"/>
    <property type="match status" value="1"/>
</dbReference>
<dbReference type="InterPro" id="IPR017652">
    <property type="entry name" value="Ac/SucOrn_transaminase_bac"/>
</dbReference>
<dbReference type="InterPro" id="IPR004636">
    <property type="entry name" value="AcOrn/SuccOrn_fam"/>
</dbReference>
<dbReference type="InterPro" id="IPR005814">
    <property type="entry name" value="Aminotrans_3"/>
</dbReference>
<dbReference type="InterPro" id="IPR049704">
    <property type="entry name" value="Aminotrans_3_PPA_site"/>
</dbReference>
<dbReference type="InterPro" id="IPR050103">
    <property type="entry name" value="Class-III_PLP-dep_AT"/>
</dbReference>
<dbReference type="InterPro" id="IPR015424">
    <property type="entry name" value="PyrdxlP-dep_Trfase"/>
</dbReference>
<dbReference type="InterPro" id="IPR015421">
    <property type="entry name" value="PyrdxlP-dep_Trfase_major"/>
</dbReference>
<dbReference type="InterPro" id="IPR015422">
    <property type="entry name" value="PyrdxlP-dep_Trfase_small"/>
</dbReference>
<dbReference type="InterPro" id="IPR026330">
    <property type="entry name" value="SOAT"/>
</dbReference>
<dbReference type="NCBIfam" id="TIGR03246">
    <property type="entry name" value="arg_catab_astC"/>
    <property type="match status" value="1"/>
</dbReference>
<dbReference type="NCBIfam" id="TIGR00707">
    <property type="entry name" value="argD"/>
    <property type="match status" value="1"/>
</dbReference>
<dbReference type="NCBIfam" id="NF002325">
    <property type="entry name" value="PRK01278.1"/>
    <property type="match status" value="1"/>
</dbReference>
<dbReference type="NCBIfam" id="NF003468">
    <property type="entry name" value="PRK05093.1"/>
    <property type="match status" value="1"/>
</dbReference>
<dbReference type="NCBIfam" id="NF009047">
    <property type="entry name" value="PRK12381.1"/>
    <property type="match status" value="1"/>
</dbReference>
<dbReference type="PANTHER" id="PTHR11986">
    <property type="entry name" value="AMINOTRANSFERASE CLASS III"/>
    <property type="match status" value="1"/>
</dbReference>
<dbReference type="PANTHER" id="PTHR11986:SF113">
    <property type="entry name" value="SUCCINYLORNITHINE TRANSAMINASE"/>
    <property type="match status" value="1"/>
</dbReference>
<dbReference type="Pfam" id="PF00202">
    <property type="entry name" value="Aminotran_3"/>
    <property type="match status" value="1"/>
</dbReference>
<dbReference type="PIRSF" id="PIRSF000521">
    <property type="entry name" value="Transaminase_4ab_Lys_Orn"/>
    <property type="match status" value="1"/>
</dbReference>
<dbReference type="SUPFAM" id="SSF53383">
    <property type="entry name" value="PLP-dependent transferases"/>
    <property type="match status" value="1"/>
</dbReference>
<dbReference type="PROSITE" id="PS00600">
    <property type="entry name" value="AA_TRANSFER_CLASS_3"/>
    <property type="match status" value="1"/>
</dbReference>